<dbReference type="EC" id="2.1.1.186" evidence="1"/>
<dbReference type="EMBL" id="AE006468">
    <property type="protein sequence ID" value="AAL21858.1"/>
    <property type="molecule type" value="Genomic_DNA"/>
</dbReference>
<dbReference type="RefSeq" id="WP_001045494.1">
    <property type="nucleotide sequence ID" value="NC_003197.2"/>
</dbReference>
<dbReference type="SMR" id="Q7CPW1"/>
<dbReference type="STRING" id="99287.STM2980"/>
<dbReference type="PaxDb" id="99287-STM2980"/>
<dbReference type="KEGG" id="stm:STM2980"/>
<dbReference type="PATRIC" id="fig|99287.12.peg.3156"/>
<dbReference type="HOGENOM" id="CLU_043780_0_0_6"/>
<dbReference type="OMA" id="PVDWMVC"/>
<dbReference type="PhylomeDB" id="Q7CPW1"/>
<dbReference type="BioCyc" id="SENT99287:STM2980-MONOMER"/>
<dbReference type="Proteomes" id="UP000001014">
    <property type="component" value="Chromosome"/>
</dbReference>
<dbReference type="GO" id="GO:0005737">
    <property type="term" value="C:cytoplasm"/>
    <property type="evidence" value="ECO:0007669"/>
    <property type="project" value="UniProtKB-SubCell"/>
</dbReference>
<dbReference type="GO" id="GO:0070677">
    <property type="term" value="F:rRNA (cytosine-2'-O-)-methyltransferase activity"/>
    <property type="evidence" value="ECO:0000318"/>
    <property type="project" value="GO_Central"/>
</dbReference>
<dbReference type="GO" id="GO:0006364">
    <property type="term" value="P:rRNA processing"/>
    <property type="evidence" value="ECO:0000318"/>
    <property type="project" value="GO_Central"/>
</dbReference>
<dbReference type="FunFam" id="3.30.2300.20:FF:000001">
    <property type="entry name" value="Ribosomal RNA large subunit methyltransferase M"/>
    <property type="match status" value="1"/>
</dbReference>
<dbReference type="FunFam" id="3.30.70.2810:FF:000001">
    <property type="entry name" value="Ribosomal RNA large subunit methyltransferase M"/>
    <property type="match status" value="1"/>
</dbReference>
<dbReference type="FunFam" id="3.40.50.150:FF:000020">
    <property type="entry name" value="Ribosomal RNA large subunit methyltransferase M"/>
    <property type="match status" value="1"/>
</dbReference>
<dbReference type="Gene3D" id="3.30.2300.20">
    <property type="match status" value="1"/>
</dbReference>
<dbReference type="Gene3D" id="3.30.70.2810">
    <property type="match status" value="1"/>
</dbReference>
<dbReference type="Gene3D" id="3.40.50.150">
    <property type="entry name" value="Vaccinia Virus protein VP39"/>
    <property type="match status" value="1"/>
</dbReference>
<dbReference type="HAMAP" id="MF_01551">
    <property type="entry name" value="23SrRNA_methyltr_M"/>
    <property type="match status" value="1"/>
</dbReference>
<dbReference type="InterPro" id="IPR040739">
    <property type="entry name" value="RlmM_FDX"/>
</dbReference>
<dbReference type="InterPro" id="IPR048646">
    <property type="entry name" value="RlmM_THUMP-like"/>
</dbReference>
<dbReference type="InterPro" id="IPR002877">
    <property type="entry name" value="RNA_MeTrfase_FtsJ_dom"/>
</dbReference>
<dbReference type="InterPro" id="IPR011224">
    <property type="entry name" value="rRNA_MeTrfase_M"/>
</dbReference>
<dbReference type="InterPro" id="IPR029063">
    <property type="entry name" value="SAM-dependent_MTases_sf"/>
</dbReference>
<dbReference type="NCBIfam" id="NF008734">
    <property type="entry name" value="PRK11760.1"/>
    <property type="match status" value="1"/>
</dbReference>
<dbReference type="PANTHER" id="PTHR37524">
    <property type="entry name" value="RIBOSOMAL RNA LARGE SUBUNIT METHYLTRANSFERASE M"/>
    <property type="match status" value="1"/>
</dbReference>
<dbReference type="PANTHER" id="PTHR37524:SF2">
    <property type="entry name" value="RIBOSOMAL RNA METHYLTRANSFERASE FTSJ DOMAIN-CONTAINING PROTEIN"/>
    <property type="match status" value="1"/>
</dbReference>
<dbReference type="Pfam" id="PF01728">
    <property type="entry name" value="FtsJ"/>
    <property type="match status" value="1"/>
</dbReference>
<dbReference type="Pfam" id="PF18125">
    <property type="entry name" value="RlmM_FDX"/>
    <property type="match status" value="1"/>
</dbReference>
<dbReference type="Pfam" id="PF21239">
    <property type="entry name" value="RLMM_N"/>
    <property type="match status" value="1"/>
</dbReference>
<dbReference type="PIRSF" id="PIRSF028774">
    <property type="entry name" value="UCP028774"/>
    <property type="match status" value="1"/>
</dbReference>
<dbReference type="SUPFAM" id="SSF53335">
    <property type="entry name" value="S-adenosyl-L-methionine-dependent methyltransferases"/>
    <property type="match status" value="1"/>
</dbReference>
<sequence>MNKVVLLCRPGFEKECAAEITDKAGKREIFGFARVKENAGYVIYECYQPEDGEKLISELPFSSLIFARQWFVVGELLQHLPPEDRITPIVGMLQGVVEKGGELRVEVADTNESKELMKFCRKFTVPLRAALRDAGVLTNYETPKRPVVHVFFIAPGCCYTGYSFAHNNSPFYMGIPRLKFPSDAPSRSTLKLEEALHVFIPEDEWDERLANGMYAVDLGACPGGWTYQLVKRNMWVYSVDNGPMAQSLMDTGQVTWLREDGFRYRPNRNNISWMVCDMVEKPAKVTALMAQWLVNGWCRETIFNLKLPMKKRYEEVSHNLAYLQAQLDEHGVNAQIQARQLYHDREEVTVHVRRLWAAVGGRRDER</sequence>
<proteinExistence type="inferred from homology"/>
<accession>Q7CPW1</accession>
<comment type="function">
    <text evidence="1">Catalyzes the 2'-O-methylation at nucleotide C2498 in 23S rRNA.</text>
</comment>
<comment type="catalytic activity">
    <reaction evidence="1">
        <text>cytidine(2498) in 23S rRNA + S-adenosyl-L-methionine = 2'-O-methylcytidine(2498) in 23S rRNA + S-adenosyl-L-homocysteine + H(+)</text>
        <dbReference type="Rhea" id="RHEA:42788"/>
        <dbReference type="Rhea" id="RHEA-COMP:10244"/>
        <dbReference type="Rhea" id="RHEA-COMP:10245"/>
        <dbReference type="ChEBI" id="CHEBI:15378"/>
        <dbReference type="ChEBI" id="CHEBI:57856"/>
        <dbReference type="ChEBI" id="CHEBI:59789"/>
        <dbReference type="ChEBI" id="CHEBI:74495"/>
        <dbReference type="ChEBI" id="CHEBI:82748"/>
        <dbReference type="EC" id="2.1.1.186"/>
    </reaction>
</comment>
<comment type="subunit">
    <text evidence="1">Monomer.</text>
</comment>
<comment type="subcellular location">
    <subcellularLocation>
        <location evidence="1">Cytoplasm</location>
    </subcellularLocation>
</comment>
<comment type="similarity">
    <text evidence="1">Belongs to the class I-like SAM-binding methyltransferase superfamily. RNA methyltransferase RlmE family. RlmM subfamily.</text>
</comment>
<reference key="1">
    <citation type="journal article" date="2001" name="Nature">
        <title>Complete genome sequence of Salmonella enterica serovar Typhimurium LT2.</title>
        <authorList>
            <person name="McClelland M."/>
            <person name="Sanderson K.E."/>
            <person name="Spieth J."/>
            <person name="Clifton S.W."/>
            <person name="Latreille P."/>
            <person name="Courtney L."/>
            <person name="Porwollik S."/>
            <person name="Ali J."/>
            <person name="Dante M."/>
            <person name="Du F."/>
            <person name="Hou S."/>
            <person name="Layman D."/>
            <person name="Leonard S."/>
            <person name="Nguyen C."/>
            <person name="Scott K."/>
            <person name="Holmes A."/>
            <person name="Grewal N."/>
            <person name="Mulvaney E."/>
            <person name="Ryan E."/>
            <person name="Sun H."/>
            <person name="Florea L."/>
            <person name="Miller W."/>
            <person name="Stoneking T."/>
            <person name="Nhan M."/>
            <person name="Waterston R."/>
            <person name="Wilson R.K."/>
        </authorList>
    </citation>
    <scope>NUCLEOTIDE SEQUENCE [LARGE SCALE GENOMIC DNA]</scope>
    <source>
        <strain>LT2 / SGSC1412 / ATCC 700720</strain>
    </source>
</reference>
<feature type="chain" id="PRO_0000070425" description="Ribosomal RNA large subunit methyltransferase M">
    <location>
        <begin position="1"/>
        <end position="366"/>
    </location>
</feature>
<feature type="active site" description="Proton acceptor" evidence="1">
    <location>
        <position position="306"/>
    </location>
</feature>
<feature type="binding site" evidence="1">
    <location>
        <position position="188"/>
    </location>
    <ligand>
        <name>S-adenosyl-L-methionine</name>
        <dbReference type="ChEBI" id="CHEBI:59789"/>
    </ligand>
</feature>
<feature type="binding site" evidence="1">
    <location>
        <begin position="221"/>
        <end position="224"/>
    </location>
    <ligand>
        <name>S-adenosyl-L-methionine</name>
        <dbReference type="ChEBI" id="CHEBI:59789"/>
    </ligand>
</feature>
<feature type="binding site" evidence="1">
    <location>
        <position position="240"/>
    </location>
    <ligand>
        <name>S-adenosyl-L-methionine</name>
        <dbReference type="ChEBI" id="CHEBI:59789"/>
    </ligand>
</feature>
<feature type="binding site" evidence="1">
    <location>
        <position position="260"/>
    </location>
    <ligand>
        <name>S-adenosyl-L-methionine</name>
        <dbReference type="ChEBI" id="CHEBI:59789"/>
    </ligand>
</feature>
<feature type="binding site" evidence="1">
    <location>
        <position position="277"/>
    </location>
    <ligand>
        <name>S-adenosyl-L-methionine</name>
        <dbReference type="ChEBI" id="CHEBI:59789"/>
    </ligand>
</feature>
<gene>
    <name evidence="1" type="primary">rlmM</name>
    <name type="ordered locus">STM2980</name>
</gene>
<evidence type="ECO:0000255" key="1">
    <source>
        <dbReference type="HAMAP-Rule" id="MF_01551"/>
    </source>
</evidence>
<name>RLMM_SALTY</name>
<organism>
    <name type="scientific">Salmonella typhimurium (strain LT2 / SGSC1412 / ATCC 700720)</name>
    <dbReference type="NCBI Taxonomy" id="99287"/>
    <lineage>
        <taxon>Bacteria</taxon>
        <taxon>Pseudomonadati</taxon>
        <taxon>Pseudomonadota</taxon>
        <taxon>Gammaproteobacteria</taxon>
        <taxon>Enterobacterales</taxon>
        <taxon>Enterobacteriaceae</taxon>
        <taxon>Salmonella</taxon>
    </lineage>
</organism>
<protein>
    <recommendedName>
        <fullName evidence="1">Ribosomal RNA large subunit methyltransferase M</fullName>
        <ecNumber evidence="1">2.1.1.186</ecNumber>
    </recommendedName>
    <alternativeName>
        <fullName evidence="1">23S rRNA (cytidine2498-2'-O)-methyltransferase</fullName>
    </alternativeName>
    <alternativeName>
        <fullName evidence="1">23S rRNA 2'-O-ribose methyltransferase RlmM</fullName>
    </alternativeName>
</protein>
<keyword id="KW-0963">Cytoplasm</keyword>
<keyword id="KW-0489">Methyltransferase</keyword>
<keyword id="KW-1185">Reference proteome</keyword>
<keyword id="KW-0698">rRNA processing</keyword>
<keyword id="KW-0949">S-adenosyl-L-methionine</keyword>
<keyword id="KW-0808">Transferase</keyword>